<protein>
    <recommendedName>
        <fullName evidence="1">Flagellar P-ring protein</fullName>
    </recommendedName>
    <alternativeName>
        <fullName evidence="1">Basal body P-ring protein</fullName>
    </alternativeName>
</protein>
<comment type="function">
    <text evidence="1">Assembles around the rod to form the L-ring and probably protects the motor/basal body from shearing forces during rotation.</text>
</comment>
<comment type="subunit">
    <text evidence="1">The basal body constitutes a major portion of the flagellar organelle and consists of four rings (L,P,S, and M) mounted on a central rod.</text>
</comment>
<comment type="subcellular location">
    <subcellularLocation>
        <location evidence="1">Periplasm</location>
    </subcellularLocation>
    <subcellularLocation>
        <location evidence="1">Bacterial flagellum basal body</location>
    </subcellularLocation>
</comment>
<comment type="similarity">
    <text evidence="1">Belongs to the FlgI family.</text>
</comment>
<evidence type="ECO:0000255" key="1">
    <source>
        <dbReference type="HAMAP-Rule" id="MF_00416"/>
    </source>
</evidence>
<dbReference type="EMBL" id="CP001657">
    <property type="protein sequence ID" value="ACT13622.1"/>
    <property type="molecule type" value="Genomic_DNA"/>
</dbReference>
<dbReference type="RefSeq" id="WP_015840796.1">
    <property type="nucleotide sequence ID" value="NC_012917.1"/>
</dbReference>
<dbReference type="SMR" id="C6D995"/>
<dbReference type="STRING" id="561230.PC1_2591"/>
<dbReference type="KEGG" id="pct:PC1_2591"/>
<dbReference type="eggNOG" id="COG1706">
    <property type="taxonomic scope" value="Bacteria"/>
</dbReference>
<dbReference type="HOGENOM" id="CLU_045235_1_0_6"/>
<dbReference type="OrthoDB" id="9786431at2"/>
<dbReference type="Proteomes" id="UP000002736">
    <property type="component" value="Chromosome"/>
</dbReference>
<dbReference type="GO" id="GO:0009428">
    <property type="term" value="C:bacterial-type flagellum basal body, distal rod, P ring"/>
    <property type="evidence" value="ECO:0007669"/>
    <property type="project" value="InterPro"/>
</dbReference>
<dbReference type="GO" id="GO:0030288">
    <property type="term" value="C:outer membrane-bounded periplasmic space"/>
    <property type="evidence" value="ECO:0007669"/>
    <property type="project" value="InterPro"/>
</dbReference>
<dbReference type="GO" id="GO:0005198">
    <property type="term" value="F:structural molecule activity"/>
    <property type="evidence" value="ECO:0007669"/>
    <property type="project" value="InterPro"/>
</dbReference>
<dbReference type="GO" id="GO:0071973">
    <property type="term" value="P:bacterial-type flagellum-dependent cell motility"/>
    <property type="evidence" value="ECO:0007669"/>
    <property type="project" value="InterPro"/>
</dbReference>
<dbReference type="HAMAP" id="MF_00416">
    <property type="entry name" value="FlgI"/>
    <property type="match status" value="1"/>
</dbReference>
<dbReference type="InterPro" id="IPR001782">
    <property type="entry name" value="Flag_FlgI"/>
</dbReference>
<dbReference type="NCBIfam" id="NF003676">
    <property type="entry name" value="PRK05303.1"/>
    <property type="match status" value="1"/>
</dbReference>
<dbReference type="PANTHER" id="PTHR30381">
    <property type="entry name" value="FLAGELLAR P-RING PERIPLASMIC PROTEIN FLGI"/>
    <property type="match status" value="1"/>
</dbReference>
<dbReference type="PANTHER" id="PTHR30381:SF0">
    <property type="entry name" value="FLAGELLAR P-RING PROTEIN"/>
    <property type="match status" value="1"/>
</dbReference>
<dbReference type="Pfam" id="PF02119">
    <property type="entry name" value="FlgI"/>
    <property type="match status" value="1"/>
</dbReference>
<dbReference type="PRINTS" id="PR01010">
    <property type="entry name" value="FLGPRINGFLGI"/>
</dbReference>
<organism>
    <name type="scientific">Pectobacterium carotovorum subsp. carotovorum (strain PC1)</name>
    <dbReference type="NCBI Taxonomy" id="561230"/>
    <lineage>
        <taxon>Bacteria</taxon>
        <taxon>Pseudomonadati</taxon>
        <taxon>Pseudomonadota</taxon>
        <taxon>Gammaproteobacteria</taxon>
        <taxon>Enterobacterales</taxon>
        <taxon>Pectobacteriaceae</taxon>
        <taxon>Pectobacterium</taxon>
    </lineage>
</organism>
<feature type="signal peptide" evidence="1">
    <location>
        <begin position="1"/>
        <end position="23"/>
    </location>
</feature>
<feature type="chain" id="PRO_5000485719" description="Flagellar P-ring protein">
    <location>
        <begin position="24"/>
        <end position="369"/>
    </location>
</feature>
<sequence length="369" mass="38243">MRIASFFTVLLTLLTLNIAPASAERIRDLVNIQGVRGNALIGYGLVVGLDGSGDQTMQTPFTTQSLTNMLSQLGITVPAGTNMQLKNVAAVMVTAELPPFGRAGQNIDVVVSSLGNAKSLRGGTLLMTPLKGVDNQVYALAQGNVLVGGAGASAGGSSVQVNQLAGGRISNGAVIERELPSTFGASNTIMLQLKNDDFSMAQKVSDAINRSGYGGTATPLDSRTIQVLAPHGNSSQVRFLADVQNIEVNVGIQDAKVVINSRTGSVVMNRDVTLDSCAIAQGNLSVTINQQANVSQPNTPFGGGQTVVTPQTEISVQQAGGALQRVNSSANLNNVVRALNSLGATPMELMSILQAMQSAGCLRAKLEII</sequence>
<keyword id="KW-0975">Bacterial flagellum</keyword>
<keyword id="KW-0574">Periplasm</keyword>
<keyword id="KW-0732">Signal</keyword>
<name>FLGI_PECCP</name>
<reference key="1">
    <citation type="submission" date="2009-07" db="EMBL/GenBank/DDBJ databases">
        <title>Complete sequence of Pectobacterium carotovorum subsp. carotovorum PC1.</title>
        <authorList>
            <consortium name="US DOE Joint Genome Institute"/>
            <person name="Lucas S."/>
            <person name="Copeland A."/>
            <person name="Lapidus A."/>
            <person name="Glavina del Rio T."/>
            <person name="Tice H."/>
            <person name="Bruce D."/>
            <person name="Goodwin L."/>
            <person name="Pitluck S."/>
            <person name="Munk A.C."/>
            <person name="Brettin T."/>
            <person name="Detter J.C."/>
            <person name="Han C."/>
            <person name="Tapia R."/>
            <person name="Larimer F."/>
            <person name="Land M."/>
            <person name="Hauser L."/>
            <person name="Kyrpides N."/>
            <person name="Mikhailova N."/>
            <person name="Balakrishnan V."/>
            <person name="Glasner J."/>
            <person name="Perna N.T."/>
        </authorList>
    </citation>
    <scope>NUCLEOTIDE SEQUENCE [LARGE SCALE GENOMIC DNA]</scope>
    <source>
        <strain>PC1</strain>
    </source>
</reference>
<proteinExistence type="inferred from homology"/>
<gene>
    <name evidence="1" type="primary">flgI</name>
    <name type="ordered locus">PC1_2591</name>
</gene>
<accession>C6D995</accession>